<feature type="chain" id="PRO_1000017077" description="tRNA pseudouridine synthase A">
    <location>
        <begin position="1"/>
        <end position="270"/>
    </location>
</feature>
<feature type="region of interest" description="RNA binding" evidence="1">
    <location>
        <begin position="107"/>
        <end position="111"/>
    </location>
</feature>
<feature type="region of interest" description="Interaction with tRNA" evidence="1">
    <location>
        <begin position="168"/>
        <end position="172"/>
    </location>
</feature>
<feature type="active site" description="Nucleophile" evidence="1">
    <location>
        <position position="60"/>
    </location>
</feature>
<feature type="binding site" evidence="1">
    <location>
        <position position="118"/>
    </location>
    <ligand>
        <name>substrate</name>
    </ligand>
</feature>
<feature type="site" description="Interaction with tRNA; Important for base-flipping" evidence="1">
    <location>
        <position position="58"/>
    </location>
</feature>
<feature type="site" description="Interaction with tRNA" evidence="1">
    <location>
        <position position="78"/>
    </location>
</feature>
<feature type="site" description="Interaction with tRNA" evidence="1">
    <location>
        <position position="110"/>
    </location>
</feature>
<feature type="site" description="Interaction with tRNA" evidence="1">
    <location>
        <position position="126"/>
    </location>
</feature>
<feature type="site" description="Interaction with tRNA" evidence="1">
    <location>
        <position position="139"/>
    </location>
</feature>
<gene>
    <name evidence="1" type="primary">truA</name>
    <name type="ordered locus">UTI89_C2603</name>
</gene>
<protein>
    <recommendedName>
        <fullName evidence="1">tRNA pseudouridine synthase A</fullName>
        <ecNumber evidence="1">5.4.99.12</ecNumber>
    </recommendedName>
    <alternativeName>
        <fullName evidence="1">tRNA pseudouridine(38-40) synthase</fullName>
    </alternativeName>
    <alternativeName>
        <fullName evidence="1">tRNA pseudouridylate synthase I</fullName>
    </alternativeName>
    <alternativeName>
        <fullName evidence="1">tRNA-uridine isomerase I</fullName>
    </alternativeName>
</protein>
<dbReference type="EC" id="5.4.99.12" evidence="1"/>
<dbReference type="EMBL" id="CP000243">
    <property type="protein sequence ID" value="ABE08070.1"/>
    <property type="molecule type" value="Genomic_DNA"/>
</dbReference>
<dbReference type="RefSeq" id="WP_001283598.1">
    <property type="nucleotide sequence ID" value="NZ_CP064825.1"/>
</dbReference>
<dbReference type="SMR" id="Q1R994"/>
<dbReference type="KEGG" id="eci:UTI89_C2603"/>
<dbReference type="HOGENOM" id="CLU_014673_0_2_6"/>
<dbReference type="Proteomes" id="UP000001952">
    <property type="component" value="Chromosome"/>
</dbReference>
<dbReference type="GO" id="GO:0003723">
    <property type="term" value="F:RNA binding"/>
    <property type="evidence" value="ECO:0007669"/>
    <property type="project" value="InterPro"/>
</dbReference>
<dbReference type="GO" id="GO:0160147">
    <property type="term" value="F:tRNA pseudouridine(38-40) synthase activity"/>
    <property type="evidence" value="ECO:0007669"/>
    <property type="project" value="UniProtKB-EC"/>
</dbReference>
<dbReference type="GO" id="GO:0031119">
    <property type="term" value="P:tRNA pseudouridine synthesis"/>
    <property type="evidence" value="ECO:0007669"/>
    <property type="project" value="UniProtKB-UniRule"/>
</dbReference>
<dbReference type="CDD" id="cd02570">
    <property type="entry name" value="PseudoU_synth_EcTruA"/>
    <property type="match status" value="1"/>
</dbReference>
<dbReference type="FunFam" id="3.30.70.580:FF:000001">
    <property type="entry name" value="tRNA pseudouridine synthase A"/>
    <property type="match status" value="1"/>
</dbReference>
<dbReference type="FunFam" id="3.30.70.660:FF:000001">
    <property type="entry name" value="tRNA pseudouridine synthase A"/>
    <property type="match status" value="1"/>
</dbReference>
<dbReference type="Gene3D" id="3.30.70.660">
    <property type="entry name" value="Pseudouridine synthase I, catalytic domain, C-terminal subdomain"/>
    <property type="match status" value="1"/>
</dbReference>
<dbReference type="Gene3D" id="3.30.70.580">
    <property type="entry name" value="Pseudouridine synthase I, catalytic domain, N-terminal subdomain"/>
    <property type="match status" value="1"/>
</dbReference>
<dbReference type="HAMAP" id="MF_00171">
    <property type="entry name" value="TruA"/>
    <property type="match status" value="1"/>
</dbReference>
<dbReference type="InterPro" id="IPR020103">
    <property type="entry name" value="PsdUridine_synth_cat_dom_sf"/>
</dbReference>
<dbReference type="InterPro" id="IPR001406">
    <property type="entry name" value="PsdUridine_synth_TruA"/>
</dbReference>
<dbReference type="InterPro" id="IPR020097">
    <property type="entry name" value="PsdUridine_synth_TruA_a/b_dom"/>
</dbReference>
<dbReference type="InterPro" id="IPR020095">
    <property type="entry name" value="PsdUridine_synth_TruA_C"/>
</dbReference>
<dbReference type="InterPro" id="IPR020094">
    <property type="entry name" value="TruA/RsuA/RluB/E/F_N"/>
</dbReference>
<dbReference type="NCBIfam" id="TIGR00071">
    <property type="entry name" value="hisT_truA"/>
    <property type="match status" value="1"/>
</dbReference>
<dbReference type="PANTHER" id="PTHR11142">
    <property type="entry name" value="PSEUDOURIDYLATE SYNTHASE"/>
    <property type="match status" value="1"/>
</dbReference>
<dbReference type="PANTHER" id="PTHR11142:SF0">
    <property type="entry name" value="TRNA PSEUDOURIDINE SYNTHASE-LIKE 1"/>
    <property type="match status" value="1"/>
</dbReference>
<dbReference type="Pfam" id="PF01416">
    <property type="entry name" value="PseudoU_synth_1"/>
    <property type="match status" value="2"/>
</dbReference>
<dbReference type="PIRSF" id="PIRSF001430">
    <property type="entry name" value="tRNA_psdUrid_synth"/>
    <property type="match status" value="1"/>
</dbReference>
<dbReference type="SUPFAM" id="SSF55120">
    <property type="entry name" value="Pseudouridine synthase"/>
    <property type="match status" value="1"/>
</dbReference>
<accession>Q1R994</accession>
<keyword id="KW-0413">Isomerase</keyword>
<keyword id="KW-0819">tRNA processing</keyword>
<name>TRUA_ECOUT</name>
<evidence type="ECO:0000255" key="1">
    <source>
        <dbReference type="HAMAP-Rule" id="MF_00171"/>
    </source>
</evidence>
<organism>
    <name type="scientific">Escherichia coli (strain UTI89 / UPEC)</name>
    <dbReference type="NCBI Taxonomy" id="364106"/>
    <lineage>
        <taxon>Bacteria</taxon>
        <taxon>Pseudomonadati</taxon>
        <taxon>Pseudomonadota</taxon>
        <taxon>Gammaproteobacteria</taxon>
        <taxon>Enterobacterales</taxon>
        <taxon>Enterobacteriaceae</taxon>
        <taxon>Escherichia</taxon>
    </lineage>
</organism>
<sequence length="270" mass="30413">MSDQQQPPVYKIALGIEYDGSRYYGWQRQNEVRSVQEKLEKALSQVANEPITVFCAGRTDAGVHGTGQVVHFETTAQRKDAAWTLGVNANLPGDIAVRWVKAVPDDFHARFSATARRYRYIIYNHRLRPAVLSKGVTHFYEPLDAERMHRAAQCLLGENDFTSFRAVQCQSRTPWRNVMHINVTRHGPYVVVDIKANAFVHHMVRNIVGSLMEVGAHNQPESWIAELLAAKDRTLAAATAKAEGLYLVAVDYPDRYDLPKPPMGPLFLAD</sequence>
<proteinExistence type="inferred from homology"/>
<comment type="function">
    <text evidence="1">Formation of pseudouridine at positions 38, 39 and 40 in the anticodon stem and loop of transfer RNAs.</text>
</comment>
<comment type="catalytic activity">
    <reaction evidence="1">
        <text>uridine(38/39/40) in tRNA = pseudouridine(38/39/40) in tRNA</text>
        <dbReference type="Rhea" id="RHEA:22376"/>
        <dbReference type="Rhea" id="RHEA-COMP:10085"/>
        <dbReference type="Rhea" id="RHEA-COMP:10087"/>
        <dbReference type="ChEBI" id="CHEBI:65314"/>
        <dbReference type="ChEBI" id="CHEBI:65315"/>
        <dbReference type="EC" id="5.4.99.12"/>
    </reaction>
</comment>
<comment type="subunit">
    <text evidence="1">Homodimer.</text>
</comment>
<comment type="similarity">
    <text evidence="1">Belongs to the tRNA pseudouridine synthase TruA family.</text>
</comment>
<reference key="1">
    <citation type="journal article" date="2006" name="Proc. Natl. Acad. Sci. U.S.A.">
        <title>Identification of genes subject to positive selection in uropathogenic strains of Escherichia coli: a comparative genomics approach.</title>
        <authorList>
            <person name="Chen S.L."/>
            <person name="Hung C.-S."/>
            <person name="Xu J."/>
            <person name="Reigstad C.S."/>
            <person name="Magrini V."/>
            <person name="Sabo A."/>
            <person name="Blasiar D."/>
            <person name="Bieri T."/>
            <person name="Meyer R.R."/>
            <person name="Ozersky P."/>
            <person name="Armstrong J.R."/>
            <person name="Fulton R.S."/>
            <person name="Latreille J.P."/>
            <person name="Spieth J."/>
            <person name="Hooton T.M."/>
            <person name="Mardis E.R."/>
            <person name="Hultgren S.J."/>
            <person name="Gordon J.I."/>
        </authorList>
    </citation>
    <scope>NUCLEOTIDE SEQUENCE [LARGE SCALE GENOMIC DNA]</scope>
    <source>
        <strain>UTI89 / UPEC</strain>
    </source>
</reference>